<accession>Q5XJ10</accession>
<accession>Q1RM54</accession>
<feature type="chain" id="PRO_0000382469" description="Glyceraldehyde-3-phosphate dehydrogenase">
    <location>
        <begin position="1"/>
        <end position="333"/>
    </location>
</feature>
<feature type="active site" description="Nucleophile" evidence="2 6">
    <location>
        <position position="150"/>
    </location>
</feature>
<feature type="binding site" evidence="2">
    <location>
        <begin position="11"/>
        <end position="12"/>
    </location>
    <ligand>
        <name>NAD(+)</name>
        <dbReference type="ChEBI" id="CHEBI:57540"/>
    </ligand>
</feature>
<feature type="binding site" evidence="2">
    <location>
        <position position="33"/>
    </location>
    <ligand>
        <name>NAD(+)</name>
        <dbReference type="ChEBI" id="CHEBI:57540"/>
    </ligand>
</feature>
<feature type="binding site" evidence="2">
    <location>
        <position position="78"/>
    </location>
    <ligand>
        <name>NAD(+)</name>
        <dbReference type="ChEBI" id="CHEBI:57540"/>
    </ligand>
</feature>
<feature type="binding site" evidence="2">
    <location>
        <position position="120"/>
    </location>
    <ligand>
        <name>NAD(+)</name>
        <dbReference type="ChEBI" id="CHEBI:57540"/>
    </ligand>
</feature>
<feature type="binding site" evidence="4">
    <location>
        <begin position="149"/>
        <end position="151"/>
    </location>
    <ligand>
        <name>D-glyceraldehyde 3-phosphate</name>
        <dbReference type="ChEBI" id="CHEBI:59776"/>
    </ligand>
</feature>
<feature type="binding site" evidence="4">
    <location>
        <position position="180"/>
    </location>
    <ligand>
        <name>D-glyceraldehyde 3-phosphate</name>
        <dbReference type="ChEBI" id="CHEBI:59776"/>
    </ligand>
</feature>
<feature type="binding site" evidence="4">
    <location>
        <begin position="209"/>
        <end position="210"/>
    </location>
    <ligand>
        <name>D-glyceraldehyde 3-phosphate</name>
        <dbReference type="ChEBI" id="CHEBI:59776"/>
    </ligand>
</feature>
<feature type="binding site" evidence="4">
    <location>
        <position position="232"/>
    </location>
    <ligand>
        <name>D-glyceraldehyde 3-phosphate</name>
        <dbReference type="ChEBI" id="CHEBI:59776"/>
    </ligand>
</feature>
<feature type="binding site" evidence="2">
    <location>
        <position position="314"/>
    </location>
    <ligand>
        <name>NAD(+)</name>
        <dbReference type="ChEBI" id="CHEBI:57540"/>
    </ligand>
</feature>
<feature type="site" description="Activates thiol group during catalysis" evidence="2">
    <location>
        <position position="177"/>
    </location>
</feature>
<feature type="modified residue" description="S-nitrosocysteine" evidence="3">
    <location>
        <position position="150"/>
    </location>
</feature>
<feature type="sequence conflict" description="In Ref. 1; AAI15132." evidence="7" ref="1">
    <original>G</original>
    <variation>E</variation>
    <location>
        <position position="210"/>
    </location>
</feature>
<feature type="sequence conflict" description="In Ref. 1; AAI15132." evidence="7" ref="1">
    <original>Y</original>
    <variation>H</variation>
    <location>
        <position position="318"/>
    </location>
</feature>
<keyword id="KW-0053">Apoptosis</keyword>
<keyword id="KW-0963">Cytoplasm</keyword>
<keyword id="KW-0206">Cytoskeleton</keyword>
<keyword id="KW-0324">Glycolysis</keyword>
<keyword id="KW-0520">NAD</keyword>
<keyword id="KW-0539">Nucleus</keyword>
<keyword id="KW-0560">Oxidoreductase</keyword>
<keyword id="KW-1185">Reference proteome</keyword>
<keyword id="KW-0702">S-nitrosylation</keyword>
<keyword id="KW-0808">Transferase</keyword>
<proteinExistence type="evidence at transcript level"/>
<protein>
    <recommendedName>
        <fullName evidence="1">Glyceraldehyde-3-phosphate dehydrogenase</fullName>
        <shortName evidence="1">GAPDH</shortName>
        <ecNumber evidence="2">1.2.1.12</ecNumber>
    </recommendedName>
    <alternativeName>
        <fullName evidence="7">Peptidyl-cysteine S-nitrosylase GAPDH</fullName>
        <ecNumber evidence="3">2.6.99.-</ecNumber>
    </alternativeName>
</protein>
<dbReference type="EC" id="1.2.1.12" evidence="2"/>
<dbReference type="EC" id="2.6.99.-" evidence="3"/>
<dbReference type="EMBL" id="BC083506">
    <property type="protein sequence ID" value="AAH83506.2"/>
    <property type="molecule type" value="mRNA"/>
</dbReference>
<dbReference type="EMBL" id="BC095386">
    <property type="protein sequence ID" value="AAH95386.2"/>
    <property type="molecule type" value="mRNA"/>
</dbReference>
<dbReference type="EMBL" id="BC115131">
    <property type="protein sequence ID" value="AAI15132.1"/>
    <property type="status" value="ALT_INIT"/>
    <property type="molecule type" value="mRNA"/>
</dbReference>
<dbReference type="RefSeq" id="NP_001108586.1">
    <property type="nucleotide sequence ID" value="NM_001115114.1"/>
</dbReference>
<dbReference type="SMR" id="Q5XJ10"/>
<dbReference type="BioGRID" id="79958">
    <property type="interactions" value="1"/>
</dbReference>
<dbReference type="FunCoup" id="Q5XJ10">
    <property type="interactions" value="906"/>
</dbReference>
<dbReference type="STRING" id="7955.ENSDARP00000063799"/>
<dbReference type="PaxDb" id="7955-ENSDARP00000063799"/>
<dbReference type="Ensembl" id="ENSDART00000063800">
    <property type="protein sequence ID" value="ENSDARP00000063799"/>
    <property type="gene ID" value="ENSDARG00000043457"/>
</dbReference>
<dbReference type="Ensembl" id="ENSDART00000163606">
    <property type="protein sequence ID" value="ENSDARP00000134592"/>
    <property type="gene ID" value="ENSDARG00000043457"/>
</dbReference>
<dbReference type="GeneID" id="317743"/>
<dbReference type="KEGG" id="dre:317743"/>
<dbReference type="AGR" id="ZFIN:ZDB-GENE-030115-1"/>
<dbReference type="CTD" id="2597"/>
<dbReference type="ZFIN" id="ZDB-GENE-030115-1">
    <property type="gene designation" value="gapdh"/>
</dbReference>
<dbReference type="eggNOG" id="KOG0657">
    <property type="taxonomic scope" value="Eukaryota"/>
</dbReference>
<dbReference type="HOGENOM" id="CLU_030140_0_3_1"/>
<dbReference type="InParanoid" id="Q5XJ10"/>
<dbReference type="OMA" id="YGYTCNM"/>
<dbReference type="OrthoDB" id="1152826at2759"/>
<dbReference type="PhylomeDB" id="Q5XJ10"/>
<dbReference type="TreeFam" id="TF300533"/>
<dbReference type="Reactome" id="R-DRE-70171">
    <property type="pathway name" value="Glycolysis"/>
</dbReference>
<dbReference type="Reactome" id="R-DRE-70263">
    <property type="pathway name" value="Gluconeogenesis"/>
</dbReference>
<dbReference type="UniPathway" id="UPA00109">
    <property type="reaction ID" value="UER00184"/>
</dbReference>
<dbReference type="PRO" id="PR:Q5XJ10"/>
<dbReference type="Proteomes" id="UP000000437">
    <property type="component" value="Chromosome 16"/>
</dbReference>
<dbReference type="Bgee" id="ENSDARG00000043457">
    <property type="expression patterns" value="Expressed in muscle tissue and 36 other cell types or tissues"/>
</dbReference>
<dbReference type="ExpressionAtlas" id="Q5XJ10">
    <property type="expression patterns" value="baseline and differential"/>
</dbReference>
<dbReference type="GO" id="GO:0005737">
    <property type="term" value="C:cytoplasm"/>
    <property type="evidence" value="ECO:0000250"/>
    <property type="project" value="UniProtKB"/>
</dbReference>
<dbReference type="GO" id="GO:0005829">
    <property type="term" value="C:cytosol"/>
    <property type="evidence" value="ECO:0000250"/>
    <property type="project" value="UniProtKB"/>
</dbReference>
<dbReference type="GO" id="GO:0015630">
    <property type="term" value="C:microtubule cytoskeleton"/>
    <property type="evidence" value="ECO:0000250"/>
    <property type="project" value="UniProtKB"/>
</dbReference>
<dbReference type="GO" id="GO:0005634">
    <property type="term" value="C:nucleus"/>
    <property type="evidence" value="ECO:0000250"/>
    <property type="project" value="UniProtKB"/>
</dbReference>
<dbReference type="GO" id="GO:0004365">
    <property type="term" value="F:glyceraldehyde-3-phosphate dehydrogenase (NAD+) (phosphorylating) activity"/>
    <property type="evidence" value="ECO:0000250"/>
    <property type="project" value="UniProtKB"/>
</dbReference>
<dbReference type="GO" id="GO:0008017">
    <property type="term" value="F:microtubule binding"/>
    <property type="evidence" value="ECO:0000250"/>
    <property type="project" value="UniProtKB"/>
</dbReference>
<dbReference type="GO" id="GO:0051287">
    <property type="term" value="F:NAD binding"/>
    <property type="evidence" value="ECO:0007669"/>
    <property type="project" value="InterPro"/>
</dbReference>
<dbReference type="GO" id="GO:0050661">
    <property type="term" value="F:NADP binding"/>
    <property type="evidence" value="ECO:0007669"/>
    <property type="project" value="InterPro"/>
</dbReference>
<dbReference type="GO" id="GO:0035605">
    <property type="term" value="F:peptidyl-cysteine S-nitrosylase activity"/>
    <property type="evidence" value="ECO:0000250"/>
    <property type="project" value="UniProtKB"/>
</dbReference>
<dbReference type="GO" id="GO:0006006">
    <property type="term" value="P:glucose metabolic process"/>
    <property type="evidence" value="ECO:0007669"/>
    <property type="project" value="InterPro"/>
</dbReference>
<dbReference type="GO" id="GO:0006096">
    <property type="term" value="P:glycolytic process"/>
    <property type="evidence" value="ECO:0000318"/>
    <property type="project" value="GO_Central"/>
</dbReference>
<dbReference type="GO" id="GO:0000226">
    <property type="term" value="P:microtubule cytoskeleton organization"/>
    <property type="evidence" value="ECO:0000250"/>
    <property type="project" value="UniProtKB"/>
</dbReference>
<dbReference type="GO" id="GO:0051402">
    <property type="term" value="P:neuron apoptotic process"/>
    <property type="evidence" value="ECO:0000250"/>
    <property type="project" value="UniProtKB"/>
</dbReference>
<dbReference type="GO" id="GO:0035606">
    <property type="term" value="P:peptidyl-cysteine S-trans-nitrosylation"/>
    <property type="evidence" value="ECO:0000250"/>
    <property type="project" value="UniProtKB"/>
</dbReference>
<dbReference type="GO" id="GO:0043123">
    <property type="term" value="P:positive regulation of canonical NF-kappaB signal transduction"/>
    <property type="evidence" value="ECO:0000250"/>
    <property type="project" value="UniProtKB"/>
</dbReference>
<dbReference type="GO" id="GO:0032481">
    <property type="term" value="P:positive regulation of type I interferon production"/>
    <property type="evidence" value="ECO:0000250"/>
    <property type="project" value="UniProtKB"/>
</dbReference>
<dbReference type="GO" id="GO:0050821">
    <property type="term" value="P:protein stabilization"/>
    <property type="evidence" value="ECO:0000250"/>
    <property type="project" value="UniProtKB"/>
</dbReference>
<dbReference type="CDD" id="cd18126">
    <property type="entry name" value="GAPDH_I_C"/>
    <property type="match status" value="1"/>
</dbReference>
<dbReference type="CDD" id="cd05214">
    <property type="entry name" value="GAPDH_I_N"/>
    <property type="match status" value="1"/>
</dbReference>
<dbReference type="FunFam" id="3.30.360.10:FF:000001">
    <property type="entry name" value="Glyceraldehyde-3-phosphate dehydrogenase"/>
    <property type="match status" value="1"/>
</dbReference>
<dbReference type="FunFam" id="3.40.50.720:FF:000319">
    <property type="entry name" value="Glyceraldehyde-3-phosphate dehydrogenase"/>
    <property type="match status" value="1"/>
</dbReference>
<dbReference type="Gene3D" id="3.30.360.10">
    <property type="entry name" value="Dihydrodipicolinate Reductase, domain 2"/>
    <property type="match status" value="1"/>
</dbReference>
<dbReference type="Gene3D" id="3.40.50.720">
    <property type="entry name" value="NAD(P)-binding Rossmann-like Domain"/>
    <property type="match status" value="1"/>
</dbReference>
<dbReference type="InterPro" id="IPR020831">
    <property type="entry name" value="GlycerAld/Erythrose_P_DH"/>
</dbReference>
<dbReference type="InterPro" id="IPR020830">
    <property type="entry name" value="GlycerAld_3-P_DH_AS"/>
</dbReference>
<dbReference type="InterPro" id="IPR020829">
    <property type="entry name" value="GlycerAld_3-P_DH_cat"/>
</dbReference>
<dbReference type="InterPro" id="IPR020828">
    <property type="entry name" value="GlycerAld_3-P_DH_NAD(P)-bd"/>
</dbReference>
<dbReference type="InterPro" id="IPR006424">
    <property type="entry name" value="Glyceraldehyde-3-P_DH_1"/>
</dbReference>
<dbReference type="InterPro" id="IPR036291">
    <property type="entry name" value="NAD(P)-bd_dom_sf"/>
</dbReference>
<dbReference type="NCBIfam" id="TIGR01534">
    <property type="entry name" value="GAPDH-I"/>
    <property type="match status" value="1"/>
</dbReference>
<dbReference type="PANTHER" id="PTHR10836">
    <property type="entry name" value="GLYCERALDEHYDE 3-PHOSPHATE DEHYDROGENASE"/>
    <property type="match status" value="1"/>
</dbReference>
<dbReference type="PANTHER" id="PTHR10836:SF111">
    <property type="entry name" value="GLYCERALDEHYDE-3-PHOSPHATE DEHYDROGENASE"/>
    <property type="match status" value="1"/>
</dbReference>
<dbReference type="Pfam" id="PF02800">
    <property type="entry name" value="Gp_dh_C"/>
    <property type="match status" value="1"/>
</dbReference>
<dbReference type="Pfam" id="PF00044">
    <property type="entry name" value="Gp_dh_N"/>
    <property type="match status" value="1"/>
</dbReference>
<dbReference type="PIRSF" id="PIRSF000149">
    <property type="entry name" value="GAP_DH"/>
    <property type="match status" value="1"/>
</dbReference>
<dbReference type="PRINTS" id="PR00078">
    <property type="entry name" value="G3PDHDRGNASE"/>
</dbReference>
<dbReference type="SMART" id="SM00846">
    <property type="entry name" value="Gp_dh_N"/>
    <property type="match status" value="1"/>
</dbReference>
<dbReference type="SUPFAM" id="SSF55347">
    <property type="entry name" value="Glyceraldehyde-3-phosphate dehydrogenase-like, C-terminal domain"/>
    <property type="match status" value="1"/>
</dbReference>
<dbReference type="SUPFAM" id="SSF51735">
    <property type="entry name" value="NAD(P)-binding Rossmann-fold domains"/>
    <property type="match status" value="1"/>
</dbReference>
<dbReference type="PROSITE" id="PS00071">
    <property type="entry name" value="GAPDH"/>
    <property type="match status" value="1"/>
</dbReference>
<organism>
    <name type="scientific">Danio rerio</name>
    <name type="common">Zebrafish</name>
    <name type="synonym">Brachydanio rerio</name>
    <dbReference type="NCBI Taxonomy" id="7955"/>
    <lineage>
        <taxon>Eukaryota</taxon>
        <taxon>Metazoa</taxon>
        <taxon>Chordata</taxon>
        <taxon>Craniata</taxon>
        <taxon>Vertebrata</taxon>
        <taxon>Euteleostomi</taxon>
        <taxon>Actinopterygii</taxon>
        <taxon>Neopterygii</taxon>
        <taxon>Teleostei</taxon>
        <taxon>Ostariophysi</taxon>
        <taxon>Cypriniformes</taxon>
        <taxon>Danionidae</taxon>
        <taxon>Danioninae</taxon>
        <taxon>Danio</taxon>
    </lineage>
</organism>
<reference evidence="8" key="1">
    <citation type="submission" date="2006-04" db="EMBL/GenBank/DDBJ databases">
        <authorList>
            <consortium name="NIH - Zebrafish Gene Collection (ZGC) project"/>
        </authorList>
    </citation>
    <scope>NUCLEOTIDE SEQUENCE [LARGE SCALE MRNA]</scope>
    <source>
        <tissue evidence="8">Embryo</tissue>
        <tissue evidence="9">Ovary</tissue>
    </source>
</reference>
<name>G3P_DANRE</name>
<gene>
    <name evidence="10" type="primary">gapdh</name>
</gene>
<evidence type="ECO:0000250" key="1">
    <source>
        <dbReference type="UniProtKB" id="P00355"/>
    </source>
</evidence>
<evidence type="ECO:0000250" key="2">
    <source>
        <dbReference type="UniProtKB" id="P04406"/>
    </source>
</evidence>
<evidence type="ECO:0000250" key="3">
    <source>
        <dbReference type="UniProtKB" id="P04797"/>
    </source>
</evidence>
<evidence type="ECO:0000250" key="4">
    <source>
        <dbReference type="UniProtKB" id="P22513"/>
    </source>
</evidence>
<evidence type="ECO:0000255" key="5"/>
<evidence type="ECO:0000255" key="6">
    <source>
        <dbReference type="PROSITE-ProRule" id="PRU10009"/>
    </source>
</evidence>
<evidence type="ECO:0000305" key="7"/>
<evidence type="ECO:0000312" key="8">
    <source>
        <dbReference type="EMBL" id="AAH83506.2"/>
    </source>
</evidence>
<evidence type="ECO:0000312" key="9">
    <source>
        <dbReference type="EMBL" id="AAI15132.1"/>
    </source>
</evidence>
<evidence type="ECO:0000312" key="10">
    <source>
        <dbReference type="ZFIN" id="ZDB-GENE-030115-1"/>
    </source>
</evidence>
<sequence length="333" mass="35784">MVKVGINGFGRIGRLVTRAAFLTKKVEIVAINDPFIDLDYMVYMFQYDSTHGKYKGEVKAEGGKLVIDGHAITVYSERDPANIKWGDAGATYVVESTGVFTTIEKASAHIKGGAKRVIISAPSADAPMFVMGVNHEKYDNSLTVVSNASCTTNCLAPLAKVINDNFVIVEGLMSTVHAITATQKTVDGPSGKLWRDGRGASQNIIPASTGAAKAVGKVIPELNGKLTGMAFRVPTPNVSVVDLTVRLEKPAKYDEIKKVVKAAADGPMKGILGYTEHQVVSTDFNGDCRSSIFDAGAGIALNDHFVKLVTWYDNEFGYSNRVCDLMAHMASKE</sequence>
<comment type="function">
    <text evidence="2 3">Has both glyceraldehyde-3-phosphate dehydrogenase and nitrosylase activities, thereby playing a role in glycolysis and nuclear functions, respectively. Glyceraldehyde-3-phosphate dehydrogenase is a key enzyme in glycolysis that catalyzes the first step of the pathway by converting D-glyceraldehyde 3-phosphate (G3P) into 3-phospho-D-glyceroyl phosphate (By similarity). Participates in nuclear events including transcription, RNA transport, DNA replication and apoptosis. Nuclear functions are probably due to the nitrosylase activity that mediates cysteine S-nitrosylation of nuclear target proteins such as SIRT1, HDAC2 and PRKDC (By similarity).</text>
</comment>
<comment type="catalytic activity">
    <reaction evidence="2 6">
        <text>D-glyceraldehyde 3-phosphate + phosphate + NAD(+) = (2R)-3-phospho-glyceroyl phosphate + NADH + H(+)</text>
        <dbReference type="Rhea" id="RHEA:10300"/>
        <dbReference type="ChEBI" id="CHEBI:15378"/>
        <dbReference type="ChEBI" id="CHEBI:43474"/>
        <dbReference type="ChEBI" id="CHEBI:57540"/>
        <dbReference type="ChEBI" id="CHEBI:57604"/>
        <dbReference type="ChEBI" id="CHEBI:57945"/>
        <dbReference type="ChEBI" id="CHEBI:59776"/>
        <dbReference type="EC" id="1.2.1.12"/>
    </reaction>
</comment>
<comment type="catalytic activity">
    <reaction evidence="3">
        <text>S-nitroso-L-cysteinyl-[GAPDH] + L-cysteinyl-[protein] = L-cysteinyl-[GAPDH] + S-nitroso-L-cysteinyl-[protein]</text>
        <dbReference type="Rhea" id="RHEA:66684"/>
        <dbReference type="Rhea" id="RHEA-COMP:10131"/>
        <dbReference type="Rhea" id="RHEA-COMP:17089"/>
        <dbReference type="Rhea" id="RHEA-COMP:17090"/>
        <dbReference type="Rhea" id="RHEA-COMP:17091"/>
        <dbReference type="ChEBI" id="CHEBI:29950"/>
        <dbReference type="ChEBI" id="CHEBI:149494"/>
    </reaction>
    <physiologicalReaction direction="left-to-right" evidence="3">
        <dbReference type="Rhea" id="RHEA:66685"/>
    </physiologicalReaction>
</comment>
<comment type="pathway">
    <text evidence="1">Carbohydrate degradation; glycolysis; pyruvate from D-glyceraldehyde 3-phosphate: step 1/5.</text>
</comment>
<comment type="subunit">
    <text evidence="2">Homotetramer.</text>
</comment>
<comment type="subcellular location">
    <subcellularLocation>
        <location evidence="3">Cytoplasm</location>
        <location evidence="3">Cytosol</location>
    </subcellularLocation>
    <subcellularLocation>
        <location evidence="3">Cytoplasm</location>
        <location evidence="3">Cytoskeleton</location>
    </subcellularLocation>
    <subcellularLocation>
        <location evidence="3">Nucleus</location>
    </subcellularLocation>
</comment>
<comment type="PTM">
    <text evidence="3">S-nitrosylation of Cys-150 leads to translocation to the nucleus.</text>
</comment>
<comment type="similarity">
    <text evidence="5">Belongs to the glyceraldehyde-3-phosphate dehydrogenase family.</text>
</comment>
<comment type="sequence caution" evidence="7">
    <conflict type="erroneous initiation">
        <sequence resource="EMBL-CDS" id="AAI15132"/>
    </conflict>
</comment>